<sequence length="352" mass="37944">MVPLVRGAGGSHQWLAAVLLGLCCLLPAGRLAAPGGDFPGAAADSLVVRKGDTAVLRCYLEDGASKGAWLNRSSIIFAGSDKWSVDPRVSIATANRREYSLQIQDVDVTDDGPYTCSVQTQHTPRTMQVHLTVQVSPKIFRISSDIVVNEGSNVTLVCLATGKPEPSISWRHISPSAKPFESGQYLDIYGITRDQAGEYECSAENDVSVPDVKKVKVTVNFAPTIQELKSSGVMLGGNGLIRCEGAGVPAPVFEWYRGERKLISGQQGITIKNYSTRSLLTVTNVTEEHFGNYTCVAANKLGMTNASLPLNPPSTAQYGITGDAEVLFSCWYLVLTLSSLTSIFYLKNIILH</sequence>
<accession>Q9W6V2</accession>
<accession>Q9W6V1</accession>
<name>NEGR1_CHICK</name>
<reference key="1">
    <citation type="journal article" date="1999" name="J. Cell Biol.">
        <title>Neurotractin, a novel neurite outgrowth-promoting Ig-like protein that interacts with CEPU-1 and LAMP.</title>
        <authorList>
            <person name="Marg A."/>
            <person name="Sirim P."/>
            <person name="Spaltmann F."/>
            <person name="Plagge A."/>
            <person name="Kauselmann G."/>
            <person name="Buck F."/>
            <person name="Rathjen F.G."/>
            <person name="Bruemmendorf T."/>
        </authorList>
    </citation>
    <scope>NUCLEOTIDE SEQUENCE [MRNA] (ISOFORMS 1 AND 2)</scope>
    <scope>FUNCTION</scope>
    <scope>GLYCOSYLATION</scope>
    <scope>TISSUE SPECIFICITY</scope>
    <scope>INTERACTION WITH CEPU-1 AND LAMP</scope>
    <source>
        <tissue>Embryonic brain</tissue>
    </source>
</reference>
<protein>
    <recommendedName>
        <fullName>Neuronal growth regulator 1</fullName>
    </recommendedName>
    <alternativeName>
        <fullName>Neurotractin</fullName>
    </alternativeName>
</protein>
<comment type="function">
    <text evidence="4">May be involved in cell-adhesion. May participate in the regulation of neurite outgrowth in the developing brain.</text>
</comment>
<comment type="subunit">
    <text evidence="4">Interacts with CEPU-1 and LAMP.</text>
</comment>
<comment type="subcellular location">
    <subcellularLocation>
        <location evidence="1">Cell membrane</location>
        <topology evidence="1">Lipid-anchor</topology>
        <topology evidence="1">GPI-anchor</topology>
    </subcellularLocation>
</comment>
<comment type="alternative products">
    <event type="alternative splicing"/>
    <isoform>
        <id>Q9W6V2-1</id>
        <name>1</name>
        <name>Neurotractin-L</name>
        <name>NTRA-L</name>
        <sequence type="displayed"/>
    </isoform>
    <isoform>
        <id>Q9W6V2-2</id>
        <name>2</name>
        <name>Neurotractin-S</name>
        <name>NTRA-S</name>
        <sequence type="described" ref="VSP_017295"/>
    </isoform>
</comment>
<comment type="tissue specificity">
    <text evidence="4">Expressed in embryonic retina, telencephalon, tectum, cerebellum and diencephalon (at protein level).</text>
</comment>
<comment type="PTM">
    <text evidence="4">Glycosylated.</text>
</comment>
<comment type="similarity">
    <text evidence="6">Belongs to the immunoglobulin superfamily. IgLON family.</text>
</comment>
<keyword id="KW-0025">Alternative splicing</keyword>
<keyword id="KW-0130">Cell adhesion</keyword>
<keyword id="KW-1003">Cell membrane</keyword>
<keyword id="KW-1015">Disulfide bond</keyword>
<keyword id="KW-0325">Glycoprotein</keyword>
<keyword id="KW-0336">GPI-anchor</keyword>
<keyword id="KW-0393">Immunoglobulin domain</keyword>
<keyword id="KW-0449">Lipoprotein</keyword>
<keyword id="KW-0472">Membrane</keyword>
<keyword id="KW-1185">Reference proteome</keyword>
<keyword id="KW-0677">Repeat</keyword>
<keyword id="KW-0732">Signal</keyword>
<organism>
    <name type="scientific">Gallus gallus</name>
    <name type="common">Chicken</name>
    <dbReference type="NCBI Taxonomy" id="9031"/>
    <lineage>
        <taxon>Eukaryota</taxon>
        <taxon>Metazoa</taxon>
        <taxon>Chordata</taxon>
        <taxon>Craniata</taxon>
        <taxon>Vertebrata</taxon>
        <taxon>Euteleostomi</taxon>
        <taxon>Archelosauria</taxon>
        <taxon>Archosauria</taxon>
        <taxon>Dinosauria</taxon>
        <taxon>Saurischia</taxon>
        <taxon>Theropoda</taxon>
        <taxon>Coelurosauria</taxon>
        <taxon>Aves</taxon>
        <taxon>Neognathae</taxon>
        <taxon>Galloanserae</taxon>
        <taxon>Galliformes</taxon>
        <taxon>Phasianidae</taxon>
        <taxon>Phasianinae</taxon>
        <taxon>Gallus</taxon>
    </lineage>
</organism>
<proteinExistence type="evidence at protein level"/>
<dbReference type="EMBL" id="AJ132998">
    <property type="protein sequence ID" value="CAB44445.1"/>
    <property type="molecule type" value="mRNA"/>
</dbReference>
<dbReference type="EMBL" id="AJ132999">
    <property type="protein sequence ID" value="CAB44446.1"/>
    <property type="molecule type" value="mRNA"/>
</dbReference>
<dbReference type="RefSeq" id="NP_990187.1">
    <molecule id="Q9W6V2-1"/>
    <property type="nucleotide sequence ID" value="NM_204856.2"/>
</dbReference>
<dbReference type="SMR" id="Q9W6V2"/>
<dbReference type="FunCoup" id="Q9W6V2">
    <property type="interactions" value="197"/>
</dbReference>
<dbReference type="STRING" id="9031.ENSGALP00000067364"/>
<dbReference type="GlyCosmos" id="Q9W6V2">
    <property type="glycosylation" value="6 sites, No reported glycans"/>
</dbReference>
<dbReference type="GlyGen" id="Q9W6V2">
    <property type="glycosylation" value="6 sites"/>
</dbReference>
<dbReference type="PaxDb" id="9031-ENSGALP00000018497"/>
<dbReference type="Ensembl" id="ENSGALT00000018520">
    <molecule id="Q9W6V2-1"/>
    <property type="protein sequence ID" value="ENSGALP00000018497"/>
    <property type="gene ID" value="ENSGALG00000011350"/>
</dbReference>
<dbReference type="Ensembl" id="ENSGALT00010058327.1">
    <molecule id="Q9W6V2-1"/>
    <property type="protein sequence ID" value="ENSGALP00010035436.1"/>
    <property type="gene ID" value="ENSGALG00010023942.1"/>
</dbReference>
<dbReference type="GeneID" id="395662"/>
<dbReference type="KEGG" id="gga:395662"/>
<dbReference type="CTD" id="257194"/>
<dbReference type="VEuPathDB" id="HostDB:geneid_395662"/>
<dbReference type="eggNOG" id="KOG3510">
    <property type="taxonomic scope" value="Eukaryota"/>
</dbReference>
<dbReference type="GeneTree" id="ENSGT00940000159289"/>
<dbReference type="HOGENOM" id="CLU_027228_2_2_1"/>
<dbReference type="InParanoid" id="Q9W6V2"/>
<dbReference type="OrthoDB" id="6159398at2759"/>
<dbReference type="PhylomeDB" id="Q9W6V2"/>
<dbReference type="PRO" id="PR:Q9W6V2"/>
<dbReference type="Proteomes" id="UP000000539">
    <property type="component" value="Chromosome 8"/>
</dbReference>
<dbReference type="GO" id="GO:0005886">
    <property type="term" value="C:plasma membrane"/>
    <property type="evidence" value="ECO:0007669"/>
    <property type="project" value="UniProtKB-SubCell"/>
</dbReference>
<dbReference type="GO" id="GO:0098552">
    <property type="term" value="C:side of membrane"/>
    <property type="evidence" value="ECO:0007669"/>
    <property type="project" value="UniProtKB-KW"/>
</dbReference>
<dbReference type="GO" id="GO:0007155">
    <property type="term" value="P:cell adhesion"/>
    <property type="evidence" value="ECO:0007669"/>
    <property type="project" value="UniProtKB-KW"/>
</dbReference>
<dbReference type="FunFam" id="2.60.40.10:FF:000013">
    <property type="entry name" value="cell adhesion molecule 1 isoform X1"/>
    <property type="match status" value="1"/>
</dbReference>
<dbReference type="FunFam" id="2.60.40.10:FF:000305">
    <property type="entry name" value="neurotrimin isoform X2"/>
    <property type="match status" value="1"/>
</dbReference>
<dbReference type="FunFam" id="2.60.40.10:FF:000113">
    <property type="entry name" value="Opioid-binding protein/cell adhesion molecule"/>
    <property type="match status" value="1"/>
</dbReference>
<dbReference type="Gene3D" id="2.60.40.10">
    <property type="entry name" value="Immunoglobulins"/>
    <property type="match status" value="3"/>
</dbReference>
<dbReference type="InterPro" id="IPR007110">
    <property type="entry name" value="Ig-like_dom"/>
</dbReference>
<dbReference type="InterPro" id="IPR036179">
    <property type="entry name" value="Ig-like_dom_sf"/>
</dbReference>
<dbReference type="InterPro" id="IPR013783">
    <property type="entry name" value="Ig-like_fold"/>
</dbReference>
<dbReference type="InterPro" id="IPR013098">
    <property type="entry name" value="Ig_I-set"/>
</dbReference>
<dbReference type="InterPro" id="IPR003599">
    <property type="entry name" value="Ig_sub"/>
</dbReference>
<dbReference type="InterPro" id="IPR003598">
    <property type="entry name" value="Ig_sub2"/>
</dbReference>
<dbReference type="InterPro" id="IPR050876">
    <property type="entry name" value="IgLON_domain"/>
</dbReference>
<dbReference type="PANTHER" id="PTHR42757">
    <property type="entry name" value="IGLON FAMILY OF IMMUNOGLOBULIN SUPERFAMILY-RELATED"/>
    <property type="match status" value="1"/>
</dbReference>
<dbReference type="PANTHER" id="PTHR42757:SF6">
    <property type="entry name" value="NEURONAL GROWTH REGULATOR 1"/>
    <property type="match status" value="1"/>
</dbReference>
<dbReference type="Pfam" id="PF07679">
    <property type="entry name" value="I-set"/>
    <property type="match status" value="1"/>
</dbReference>
<dbReference type="Pfam" id="PF13927">
    <property type="entry name" value="Ig_3"/>
    <property type="match status" value="2"/>
</dbReference>
<dbReference type="SMART" id="SM00409">
    <property type="entry name" value="IG"/>
    <property type="match status" value="3"/>
</dbReference>
<dbReference type="SMART" id="SM00408">
    <property type="entry name" value="IGc2"/>
    <property type="match status" value="3"/>
</dbReference>
<dbReference type="SUPFAM" id="SSF48726">
    <property type="entry name" value="Immunoglobulin"/>
    <property type="match status" value="3"/>
</dbReference>
<dbReference type="PROSITE" id="PS50835">
    <property type="entry name" value="IG_LIKE"/>
    <property type="match status" value="3"/>
</dbReference>
<feature type="signal peptide" evidence="1">
    <location>
        <begin position="1"/>
        <end position="35"/>
    </location>
</feature>
<feature type="chain" id="PRO_0000223873" description="Neuronal growth regulator 1">
    <location>
        <begin position="36"/>
        <end position="322"/>
    </location>
</feature>
<feature type="propeptide" id="PRO_0000223874" description="Removed in mature form" evidence="2">
    <location>
        <begin position="323"/>
        <end position="352"/>
    </location>
</feature>
<feature type="domain" description="Ig-like C2-type 1">
    <location>
        <begin position="36"/>
        <end position="132"/>
    </location>
</feature>
<feature type="domain" description="Ig-like C2-type 2">
    <location>
        <begin position="137"/>
        <end position="219"/>
    </location>
</feature>
<feature type="domain" description="Ig-like C2-type 3">
    <location>
        <begin position="223"/>
        <end position="311"/>
    </location>
</feature>
<feature type="lipid moiety-binding region" description="GPI-anchor amidated glycine" evidence="2">
    <location>
        <position position="322"/>
    </location>
</feature>
<feature type="glycosylation site" description="N-linked (GlcNAc...) asparagine" evidence="2">
    <location>
        <position position="71"/>
    </location>
</feature>
<feature type="glycosylation site" description="N-linked (GlcNAc...) asparagine" evidence="2">
    <location>
        <position position="153"/>
    </location>
</feature>
<feature type="glycosylation site" description="N-linked (GlcNAc...) asparagine" evidence="2">
    <location>
        <position position="273"/>
    </location>
</feature>
<feature type="glycosylation site" description="N-linked (GlcNAc...) asparagine" evidence="2">
    <location>
        <position position="284"/>
    </location>
</feature>
<feature type="glycosylation site" description="N-linked (GlcNAc...) asparagine" evidence="2">
    <location>
        <position position="292"/>
    </location>
</feature>
<feature type="glycosylation site" description="N-linked (GlcNAc...) asparagine" evidence="2">
    <location>
        <position position="305"/>
    </location>
</feature>
<feature type="disulfide bond" evidence="3">
    <location>
        <begin position="58"/>
        <end position="116"/>
    </location>
</feature>
<feature type="disulfide bond" evidence="3">
    <location>
        <begin position="158"/>
        <end position="201"/>
    </location>
</feature>
<feature type="disulfide bond" evidence="3">
    <location>
        <begin position="243"/>
        <end position="295"/>
    </location>
</feature>
<feature type="splice variant" id="VSP_017295" description="In isoform 2." evidence="5">
    <location>
        <begin position="221"/>
        <end position="311"/>
    </location>
</feature>
<feature type="sequence conflict" description="In Ref. 1; CAB44445." evidence="6" ref="1">
    <original>G</original>
    <variation>V</variation>
    <location>
        <position position="190"/>
    </location>
</feature>
<feature type="sequence conflict" description="In Ref. 1; CAB44445." evidence="6" ref="1">
    <original>P</original>
    <variation>S</variation>
    <location>
        <position position="312"/>
    </location>
</feature>
<evidence type="ECO:0000250" key="1"/>
<evidence type="ECO:0000255" key="2"/>
<evidence type="ECO:0000255" key="3">
    <source>
        <dbReference type="PROSITE-ProRule" id="PRU00114"/>
    </source>
</evidence>
<evidence type="ECO:0000269" key="4">
    <source>
    </source>
</evidence>
<evidence type="ECO:0000303" key="5">
    <source>
    </source>
</evidence>
<evidence type="ECO:0000305" key="6"/>
<gene>
    <name type="primary">NEGR1</name>
    <name type="synonym">NTRA</name>
</gene>